<feature type="chain" id="PRO_1000134066" description="2,3,4,5-tetrahydropyridine-2,6-dicarboxylate N-succinyltransferase">
    <location>
        <begin position="1"/>
        <end position="274"/>
    </location>
</feature>
<accession>B5RHF1</accession>
<evidence type="ECO:0000255" key="1">
    <source>
        <dbReference type="HAMAP-Rule" id="MF_00811"/>
    </source>
</evidence>
<sequence>MQQLQNVIETAFERRADITPANVDTVTREAVKQVISLLDSGALRVAEKIDGQWVTHQWLKKAVLLSFRINDNQVIDGAESRYFDKVPMKFADYDEARFQKEGFRVVPPAAVRQGAFIARNTVLMPSYVNIGAYVDEGTMVDTWATVGSCAQIGKNVHLSGGVGIGGVLEPLQANPTIIEDNCFIGARSEVVEGVIVEEGSVISMGVYLGQSTKIYDRETGEVHYGRVPAGSVVVSGNLPSKDGKYSLYCAVIVKKVDAKTRGKVGINELLRTID</sequence>
<organism>
    <name type="scientific">Salmonella gallinarum (strain 287/91 / NCTC 13346)</name>
    <dbReference type="NCBI Taxonomy" id="550538"/>
    <lineage>
        <taxon>Bacteria</taxon>
        <taxon>Pseudomonadati</taxon>
        <taxon>Pseudomonadota</taxon>
        <taxon>Gammaproteobacteria</taxon>
        <taxon>Enterobacterales</taxon>
        <taxon>Enterobacteriaceae</taxon>
        <taxon>Salmonella</taxon>
    </lineage>
</organism>
<dbReference type="EC" id="2.3.1.117" evidence="1"/>
<dbReference type="EMBL" id="AM933173">
    <property type="protein sequence ID" value="CAR36124.1"/>
    <property type="molecule type" value="Genomic_DNA"/>
</dbReference>
<dbReference type="RefSeq" id="WP_001186670.1">
    <property type="nucleotide sequence ID" value="NC_011274.1"/>
</dbReference>
<dbReference type="SMR" id="B5RHF1"/>
<dbReference type="KEGG" id="seg:SG0217"/>
<dbReference type="HOGENOM" id="CLU_050859_0_1_6"/>
<dbReference type="UniPathway" id="UPA00034">
    <property type="reaction ID" value="UER00019"/>
</dbReference>
<dbReference type="Proteomes" id="UP000008321">
    <property type="component" value="Chromosome"/>
</dbReference>
<dbReference type="GO" id="GO:0005737">
    <property type="term" value="C:cytoplasm"/>
    <property type="evidence" value="ECO:0007669"/>
    <property type="project" value="UniProtKB-SubCell"/>
</dbReference>
<dbReference type="GO" id="GO:0008666">
    <property type="term" value="F:2,3,4,5-tetrahydropyridine-2,6-dicarboxylate N-succinyltransferase activity"/>
    <property type="evidence" value="ECO:0007669"/>
    <property type="project" value="UniProtKB-UniRule"/>
</dbReference>
<dbReference type="GO" id="GO:0016779">
    <property type="term" value="F:nucleotidyltransferase activity"/>
    <property type="evidence" value="ECO:0007669"/>
    <property type="project" value="TreeGrafter"/>
</dbReference>
<dbReference type="GO" id="GO:0019877">
    <property type="term" value="P:diaminopimelate biosynthetic process"/>
    <property type="evidence" value="ECO:0007669"/>
    <property type="project" value="UniProtKB-UniRule"/>
</dbReference>
<dbReference type="GO" id="GO:0009089">
    <property type="term" value="P:lysine biosynthetic process via diaminopimelate"/>
    <property type="evidence" value="ECO:0007669"/>
    <property type="project" value="UniProtKB-UniRule"/>
</dbReference>
<dbReference type="CDD" id="cd03350">
    <property type="entry name" value="LbH_THP_succinylT"/>
    <property type="match status" value="1"/>
</dbReference>
<dbReference type="FunFam" id="2.160.10.10:FF:000004">
    <property type="entry name" value="2,3,4,5-tetrahydropyridine-2,6-dicarboxylate N-succinyltransferase"/>
    <property type="match status" value="1"/>
</dbReference>
<dbReference type="Gene3D" id="2.160.10.10">
    <property type="entry name" value="Hexapeptide repeat proteins"/>
    <property type="match status" value="1"/>
</dbReference>
<dbReference type="Gene3D" id="1.10.166.10">
    <property type="entry name" value="Tetrahydrodipicolinate-N-succinyltransferase, N-terminal domain"/>
    <property type="match status" value="1"/>
</dbReference>
<dbReference type="HAMAP" id="MF_00811">
    <property type="entry name" value="DapD"/>
    <property type="match status" value="1"/>
</dbReference>
<dbReference type="InterPro" id="IPR005664">
    <property type="entry name" value="DapD_Trfase_Hexpep_rpt_fam"/>
</dbReference>
<dbReference type="InterPro" id="IPR001451">
    <property type="entry name" value="Hexapep"/>
</dbReference>
<dbReference type="InterPro" id="IPR018357">
    <property type="entry name" value="Hexapep_transf_CS"/>
</dbReference>
<dbReference type="InterPro" id="IPR023180">
    <property type="entry name" value="THP_succinylTrfase_dom1"/>
</dbReference>
<dbReference type="InterPro" id="IPR037133">
    <property type="entry name" value="THP_succinylTrfase_N_sf"/>
</dbReference>
<dbReference type="InterPro" id="IPR011004">
    <property type="entry name" value="Trimer_LpxA-like_sf"/>
</dbReference>
<dbReference type="NCBIfam" id="TIGR00965">
    <property type="entry name" value="dapD"/>
    <property type="match status" value="1"/>
</dbReference>
<dbReference type="NCBIfam" id="NF008808">
    <property type="entry name" value="PRK11830.1"/>
    <property type="match status" value="1"/>
</dbReference>
<dbReference type="PANTHER" id="PTHR19136:SF52">
    <property type="entry name" value="2,3,4,5-TETRAHYDROPYRIDINE-2,6-DICARBOXYLATE N-SUCCINYLTRANSFERASE"/>
    <property type="match status" value="1"/>
</dbReference>
<dbReference type="PANTHER" id="PTHR19136">
    <property type="entry name" value="MOLYBDENUM COFACTOR GUANYLYLTRANSFERASE"/>
    <property type="match status" value="1"/>
</dbReference>
<dbReference type="Pfam" id="PF14602">
    <property type="entry name" value="Hexapep_2"/>
    <property type="match status" value="1"/>
</dbReference>
<dbReference type="Pfam" id="PF14805">
    <property type="entry name" value="THDPS_N_2"/>
    <property type="match status" value="1"/>
</dbReference>
<dbReference type="SUPFAM" id="SSF51161">
    <property type="entry name" value="Trimeric LpxA-like enzymes"/>
    <property type="match status" value="1"/>
</dbReference>
<dbReference type="PROSITE" id="PS00101">
    <property type="entry name" value="HEXAPEP_TRANSFERASES"/>
    <property type="match status" value="1"/>
</dbReference>
<comment type="catalytic activity">
    <reaction evidence="1">
        <text>(S)-2,3,4,5-tetrahydrodipicolinate + succinyl-CoA + H2O = (S)-2-succinylamino-6-oxoheptanedioate + CoA</text>
        <dbReference type="Rhea" id="RHEA:17325"/>
        <dbReference type="ChEBI" id="CHEBI:15377"/>
        <dbReference type="ChEBI" id="CHEBI:15685"/>
        <dbReference type="ChEBI" id="CHEBI:16845"/>
        <dbReference type="ChEBI" id="CHEBI:57287"/>
        <dbReference type="ChEBI" id="CHEBI:57292"/>
        <dbReference type="EC" id="2.3.1.117"/>
    </reaction>
</comment>
<comment type="pathway">
    <text evidence="1">Amino-acid biosynthesis; L-lysine biosynthesis via DAP pathway; LL-2,6-diaminopimelate from (S)-tetrahydrodipicolinate (succinylase route): step 1/3.</text>
</comment>
<comment type="subcellular location">
    <subcellularLocation>
        <location evidence="1">Cytoplasm</location>
    </subcellularLocation>
</comment>
<comment type="similarity">
    <text evidence="1">Belongs to the transferase hexapeptide repeat family.</text>
</comment>
<keyword id="KW-0012">Acyltransferase</keyword>
<keyword id="KW-0028">Amino-acid biosynthesis</keyword>
<keyword id="KW-0963">Cytoplasm</keyword>
<keyword id="KW-0220">Diaminopimelate biosynthesis</keyword>
<keyword id="KW-0457">Lysine biosynthesis</keyword>
<keyword id="KW-0677">Repeat</keyword>
<keyword id="KW-0808">Transferase</keyword>
<gene>
    <name evidence="1" type="primary">dapD</name>
    <name type="ordered locus">SG0217</name>
</gene>
<name>DAPD_SALG2</name>
<protein>
    <recommendedName>
        <fullName evidence="1">2,3,4,5-tetrahydropyridine-2,6-dicarboxylate N-succinyltransferase</fullName>
        <ecNumber evidence="1">2.3.1.117</ecNumber>
    </recommendedName>
    <alternativeName>
        <fullName evidence="1">Tetrahydrodipicolinate N-succinyltransferase</fullName>
        <shortName evidence="1">THP succinyltransferase</shortName>
        <shortName evidence="1">Tetrahydropicolinate succinylase</shortName>
    </alternativeName>
</protein>
<proteinExistence type="inferred from homology"/>
<reference key="1">
    <citation type="journal article" date="2008" name="Genome Res.">
        <title>Comparative genome analysis of Salmonella enteritidis PT4 and Salmonella gallinarum 287/91 provides insights into evolutionary and host adaptation pathways.</title>
        <authorList>
            <person name="Thomson N.R."/>
            <person name="Clayton D.J."/>
            <person name="Windhorst D."/>
            <person name="Vernikos G."/>
            <person name="Davidson S."/>
            <person name="Churcher C."/>
            <person name="Quail M.A."/>
            <person name="Stevens M."/>
            <person name="Jones M.A."/>
            <person name="Watson M."/>
            <person name="Barron A."/>
            <person name="Layton A."/>
            <person name="Pickard D."/>
            <person name="Kingsley R.A."/>
            <person name="Bignell A."/>
            <person name="Clark L."/>
            <person name="Harris B."/>
            <person name="Ormond D."/>
            <person name="Abdellah Z."/>
            <person name="Brooks K."/>
            <person name="Cherevach I."/>
            <person name="Chillingworth T."/>
            <person name="Woodward J."/>
            <person name="Norberczak H."/>
            <person name="Lord A."/>
            <person name="Arrowsmith C."/>
            <person name="Jagels K."/>
            <person name="Moule S."/>
            <person name="Mungall K."/>
            <person name="Saunders M."/>
            <person name="Whitehead S."/>
            <person name="Chabalgoity J.A."/>
            <person name="Maskell D."/>
            <person name="Humphreys T."/>
            <person name="Roberts M."/>
            <person name="Barrow P.A."/>
            <person name="Dougan G."/>
            <person name="Parkhill J."/>
        </authorList>
    </citation>
    <scope>NUCLEOTIDE SEQUENCE [LARGE SCALE GENOMIC DNA]</scope>
    <source>
        <strain>287/91 / NCTC 13346</strain>
    </source>
</reference>